<organism>
    <name type="scientific">Cytophaga hutchinsonii (strain ATCC 33406 / DSM 1761 / CIP 103989 / NBRC 15051 / NCIMB 9469 / D465)</name>
    <dbReference type="NCBI Taxonomy" id="269798"/>
    <lineage>
        <taxon>Bacteria</taxon>
        <taxon>Pseudomonadati</taxon>
        <taxon>Bacteroidota</taxon>
        <taxon>Cytophagia</taxon>
        <taxon>Cytophagales</taxon>
        <taxon>Cytophagaceae</taxon>
        <taxon>Cytophaga</taxon>
    </lineage>
</organism>
<accession>Q11RA1</accession>
<proteinExistence type="inferred from homology"/>
<keyword id="KW-0963">Cytoplasm</keyword>
<keyword id="KW-0378">Hydrolase</keyword>
<keyword id="KW-1185">Reference proteome</keyword>
<keyword id="KW-0694">RNA-binding</keyword>
<keyword id="KW-0820">tRNA-binding</keyword>
<sequence>MIAVIQRVRKASVEIADKEHASIAAGLLVLLGITHTDEELDVEWLSAKICSLRIFSDEAGKMNRSLSEINGELLVVSQFTLFASTKKGNRPSFIEAARPEQAIPLYEQFIAACEMQLNQKIKTGIFGADMQVALINDGPVTILIDSKNKQ</sequence>
<feature type="chain" id="PRO_0000259275" description="D-aminoacyl-tRNA deacylase">
    <location>
        <begin position="1"/>
        <end position="150"/>
    </location>
</feature>
<feature type="short sequence motif" description="Gly-cisPro motif, important for rejection of L-amino acids" evidence="1">
    <location>
        <begin position="138"/>
        <end position="139"/>
    </location>
</feature>
<protein>
    <recommendedName>
        <fullName evidence="1">D-aminoacyl-tRNA deacylase</fullName>
        <shortName evidence="1">DTD</shortName>
        <ecNumber evidence="1">3.1.1.96</ecNumber>
    </recommendedName>
    <alternativeName>
        <fullName evidence="1">Gly-tRNA(Ala) deacylase</fullName>
    </alternativeName>
</protein>
<name>DTD_CYTH3</name>
<comment type="function">
    <text evidence="1">An aminoacyl-tRNA editing enzyme that deacylates mischarged D-aminoacyl-tRNAs. Also deacylates mischarged glycyl-tRNA(Ala), protecting cells against glycine mischarging by AlaRS. Acts via tRNA-based rather than protein-based catalysis; rejects L-amino acids rather than detecting D-amino acids in the active site. By recycling D-aminoacyl-tRNA to D-amino acids and free tRNA molecules, this enzyme counteracts the toxicity associated with the formation of D-aminoacyl-tRNA entities in vivo and helps enforce protein L-homochirality.</text>
</comment>
<comment type="catalytic activity">
    <reaction evidence="1">
        <text>glycyl-tRNA(Ala) + H2O = tRNA(Ala) + glycine + H(+)</text>
        <dbReference type="Rhea" id="RHEA:53744"/>
        <dbReference type="Rhea" id="RHEA-COMP:9657"/>
        <dbReference type="Rhea" id="RHEA-COMP:13640"/>
        <dbReference type="ChEBI" id="CHEBI:15377"/>
        <dbReference type="ChEBI" id="CHEBI:15378"/>
        <dbReference type="ChEBI" id="CHEBI:57305"/>
        <dbReference type="ChEBI" id="CHEBI:78442"/>
        <dbReference type="ChEBI" id="CHEBI:78522"/>
        <dbReference type="EC" id="3.1.1.96"/>
    </reaction>
</comment>
<comment type="catalytic activity">
    <reaction evidence="1">
        <text>a D-aminoacyl-tRNA + H2O = a tRNA + a D-alpha-amino acid + H(+)</text>
        <dbReference type="Rhea" id="RHEA:13953"/>
        <dbReference type="Rhea" id="RHEA-COMP:10123"/>
        <dbReference type="Rhea" id="RHEA-COMP:10124"/>
        <dbReference type="ChEBI" id="CHEBI:15377"/>
        <dbReference type="ChEBI" id="CHEBI:15378"/>
        <dbReference type="ChEBI" id="CHEBI:59871"/>
        <dbReference type="ChEBI" id="CHEBI:78442"/>
        <dbReference type="ChEBI" id="CHEBI:79333"/>
        <dbReference type="EC" id="3.1.1.96"/>
    </reaction>
</comment>
<comment type="subunit">
    <text evidence="1">Homodimer.</text>
</comment>
<comment type="subcellular location">
    <subcellularLocation>
        <location evidence="1">Cytoplasm</location>
    </subcellularLocation>
</comment>
<comment type="domain">
    <text evidence="1">A Gly-cisPro motif from one monomer fits into the active site of the other monomer to allow specific chiral rejection of L-amino acids.</text>
</comment>
<comment type="similarity">
    <text evidence="1">Belongs to the DTD family.</text>
</comment>
<gene>
    <name evidence="1" type="primary">dtd</name>
    <name type="ordered locus">CHU_2815</name>
</gene>
<reference key="1">
    <citation type="journal article" date="2007" name="Appl. Environ. Microbiol.">
        <title>Genome sequence of the cellulolytic gliding bacterium Cytophaga hutchinsonii.</title>
        <authorList>
            <person name="Xie G."/>
            <person name="Bruce D.C."/>
            <person name="Challacombe J.F."/>
            <person name="Chertkov O."/>
            <person name="Detter J.C."/>
            <person name="Gilna P."/>
            <person name="Han C.S."/>
            <person name="Lucas S."/>
            <person name="Misra M."/>
            <person name="Myers G.L."/>
            <person name="Richardson P."/>
            <person name="Tapia R."/>
            <person name="Thayer N."/>
            <person name="Thompson L.S."/>
            <person name="Brettin T.S."/>
            <person name="Henrissat B."/>
            <person name="Wilson D.B."/>
            <person name="McBride M.J."/>
        </authorList>
    </citation>
    <scope>NUCLEOTIDE SEQUENCE [LARGE SCALE GENOMIC DNA]</scope>
    <source>
        <strain>ATCC 33406 / DSM 1761 / JCM 20678 / CIP 103989 / IAM 12607 / NBRC 15051 / NCIMB 9469 / D465</strain>
    </source>
</reference>
<dbReference type="EC" id="3.1.1.96" evidence="1"/>
<dbReference type="EMBL" id="CP000383">
    <property type="protein sequence ID" value="ABG60063.1"/>
    <property type="molecule type" value="Genomic_DNA"/>
</dbReference>
<dbReference type="RefSeq" id="WP_011586173.1">
    <property type="nucleotide sequence ID" value="NC_008255.1"/>
</dbReference>
<dbReference type="SMR" id="Q11RA1"/>
<dbReference type="STRING" id="269798.CHU_2815"/>
<dbReference type="KEGG" id="chu:CHU_2815"/>
<dbReference type="eggNOG" id="COG1490">
    <property type="taxonomic scope" value="Bacteria"/>
</dbReference>
<dbReference type="HOGENOM" id="CLU_076901_1_0_10"/>
<dbReference type="OrthoDB" id="9801395at2"/>
<dbReference type="Proteomes" id="UP000001822">
    <property type="component" value="Chromosome"/>
</dbReference>
<dbReference type="GO" id="GO:0005737">
    <property type="term" value="C:cytoplasm"/>
    <property type="evidence" value="ECO:0007669"/>
    <property type="project" value="UniProtKB-SubCell"/>
</dbReference>
<dbReference type="GO" id="GO:0051500">
    <property type="term" value="F:D-tyrosyl-tRNA(Tyr) deacylase activity"/>
    <property type="evidence" value="ECO:0007669"/>
    <property type="project" value="TreeGrafter"/>
</dbReference>
<dbReference type="GO" id="GO:0106026">
    <property type="term" value="F:Gly-tRNA(Ala) deacylase activity"/>
    <property type="evidence" value="ECO:0007669"/>
    <property type="project" value="UniProtKB-UniRule"/>
</dbReference>
<dbReference type="GO" id="GO:0043908">
    <property type="term" value="F:Ser(Gly)-tRNA(Ala) hydrolase activity"/>
    <property type="evidence" value="ECO:0007669"/>
    <property type="project" value="UniProtKB-UniRule"/>
</dbReference>
<dbReference type="GO" id="GO:0000049">
    <property type="term" value="F:tRNA binding"/>
    <property type="evidence" value="ECO:0007669"/>
    <property type="project" value="UniProtKB-UniRule"/>
</dbReference>
<dbReference type="GO" id="GO:0019478">
    <property type="term" value="P:D-amino acid catabolic process"/>
    <property type="evidence" value="ECO:0007669"/>
    <property type="project" value="UniProtKB-UniRule"/>
</dbReference>
<dbReference type="CDD" id="cd00563">
    <property type="entry name" value="Dtyr_deacylase"/>
    <property type="match status" value="1"/>
</dbReference>
<dbReference type="FunFam" id="3.50.80.10:FF:000001">
    <property type="entry name" value="D-aminoacyl-tRNA deacylase"/>
    <property type="match status" value="1"/>
</dbReference>
<dbReference type="Gene3D" id="3.50.80.10">
    <property type="entry name" value="D-tyrosyl-tRNA(Tyr) deacylase"/>
    <property type="match status" value="1"/>
</dbReference>
<dbReference type="HAMAP" id="MF_00518">
    <property type="entry name" value="Deacylase_Dtd"/>
    <property type="match status" value="1"/>
</dbReference>
<dbReference type="InterPro" id="IPR003732">
    <property type="entry name" value="Daa-tRNA_deacyls_DTD"/>
</dbReference>
<dbReference type="InterPro" id="IPR023509">
    <property type="entry name" value="DTD-like_sf"/>
</dbReference>
<dbReference type="NCBIfam" id="TIGR00256">
    <property type="entry name" value="D-aminoacyl-tRNA deacylase"/>
    <property type="match status" value="1"/>
</dbReference>
<dbReference type="PANTHER" id="PTHR10472:SF5">
    <property type="entry name" value="D-AMINOACYL-TRNA DEACYLASE 1"/>
    <property type="match status" value="1"/>
</dbReference>
<dbReference type="PANTHER" id="PTHR10472">
    <property type="entry name" value="D-TYROSYL-TRNA TYR DEACYLASE"/>
    <property type="match status" value="1"/>
</dbReference>
<dbReference type="Pfam" id="PF02580">
    <property type="entry name" value="Tyr_Deacylase"/>
    <property type="match status" value="1"/>
</dbReference>
<dbReference type="SUPFAM" id="SSF69500">
    <property type="entry name" value="DTD-like"/>
    <property type="match status" value="1"/>
</dbReference>
<evidence type="ECO:0000255" key="1">
    <source>
        <dbReference type="HAMAP-Rule" id="MF_00518"/>
    </source>
</evidence>